<dbReference type="EMBL" id="AM181176">
    <property type="protein sequence ID" value="CAY51526.1"/>
    <property type="molecule type" value="Genomic_DNA"/>
</dbReference>
<dbReference type="RefSeq" id="WP_015885443.1">
    <property type="nucleotide sequence ID" value="NC_012660.1"/>
</dbReference>
<dbReference type="SMR" id="C3K0P6"/>
<dbReference type="STRING" id="294.SRM1_04182"/>
<dbReference type="PATRIC" id="fig|216595.4.peg.4853"/>
<dbReference type="eggNOG" id="COG1301">
    <property type="taxonomic scope" value="Bacteria"/>
</dbReference>
<dbReference type="HOGENOM" id="CLU_019375_7_0_6"/>
<dbReference type="OrthoDB" id="9766690at2"/>
<dbReference type="GO" id="GO:0005886">
    <property type="term" value="C:plasma membrane"/>
    <property type="evidence" value="ECO:0007669"/>
    <property type="project" value="UniProtKB-SubCell"/>
</dbReference>
<dbReference type="GO" id="GO:0015138">
    <property type="term" value="F:fumarate transmembrane transporter activity"/>
    <property type="evidence" value="ECO:0007669"/>
    <property type="project" value="TreeGrafter"/>
</dbReference>
<dbReference type="GO" id="GO:0015366">
    <property type="term" value="F:malate:proton symporter activity"/>
    <property type="evidence" value="ECO:0007669"/>
    <property type="project" value="TreeGrafter"/>
</dbReference>
<dbReference type="GO" id="GO:0015141">
    <property type="term" value="F:succinate transmembrane transporter activity"/>
    <property type="evidence" value="ECO:0007669"/>
    <property type="project" value="TreeGrafter"/>
</dbReference>
<dbReference type="GO" id="GO:0070778">
    <property type="term" value="P:L-aspartate transmembrane transport"/>
    <property type="evidence" value="ECO:0007669"/>
    <property type="project" value="TreeGrafter"/>
</dbReference>
<dbReference type="FunFam" id="1.10.3860.10:FF:000001">
    <property type="entry name" value="C4-dicarboxylate transport protein"/>
    <property type="match status" value="1"/>
</dbReference>
<dbReference type="Gene3D" id="1.10.3860.10">
    <property type="entry name" value="Sodium:dicarboxylate symporter"/>
    <property type="match status" value="1"/>
</dbReference>
<dbReference type="HAMAP" id="MF_01300">
    <property type="entry name" value="C4_dicarb_transport"/>
    <property type="match status" value="1"/>
</dbReference>
<dbReference type="InterPro" id="IPR023954">
    <property type="entry name" value="C4_dicarb_transport"/>
</dbReference>
<dbReference type="InterPro" id="IPR001991">
    <property type="entry name" value="Na-dicarboxylate_symporter"/>
</dbReference>
<dbReference type="InterPro" id="IPR018107">
    <property type="entry name" value="Na-dicarboxylate_symporter_CS"/>
</dbReference>
<dbReference type="InterPro" id="IPR036458">
    <property type="entry name" value="Na:dicarbo_symporter_sf"/>
</dbReference>
<dbReference type="NCBIfam" id="NF002461">
    <property type="entry name" value="PRK01663.1"/>
    <property type="match status" value="1"/>
</dbReference>
<dbReference type="NCBIfam" id="NF009587">
    <property type="entry name" value="PRK13027.1"/>
    <property type="match status" value="1"/>
</dbReference>
<dbReference type="PANTHER" id="PTHR42865:SF1">
    <property type="entry name" value="AEROBIC C4-DICARBOXYLATE TRANSPORT PROTEIN"/>
    <property type="match status" value="1"/>
</dbReference>
<dbReference type="PANTHER" id="PTHR42865">
    <property type="entry name" value="PROTON/GLUTAMATE-ASPARTATE SYMPORTER"/>
    <property type="match status" value="1"/>
</dbReference>
<dbReference type="Pfam" id="PF00375">
    <property type="entry name" value="SDF"/>
    <property type="match status" value="1"/>
</dbReference>
<dbReference type="PRINTS" id="PR00173">
    <property type="entry name" value="EDTRNSPORT"/>
</dbReference>
<dbReference type="SUPFAM" id="SSF118215">
    <property type="entry name" value="Proton glutamate symport protein"/>
    <property type="match status" value="1"/>
</dbReference>
<dbReference type="PROSITE" id="PS00713">
    <property type="entry name" value="NA_DICARBOXYL_SYMP_1"/>
    <property type="match status" value="1"/>
</dbReference>
<dbReference type="PROSITE" id="PS00714">
    <property type="entry name" value="NA_DICARBOXYL_SYMP_2"/>
    <property type="match status" value="1"/>
</dbReference>
<accession>C3K0P6</accession>
<protein>
    <recommendedName>
        <fullName evidence="1">C4-dicarboxylate transport protein</fullName>
    </recommendedName>
</protein>
<evidence type="ECO:0000255" key="1">
    <source>
        <dbReference type="HAMAP-Rule" id="MF_01300"/>
    </source>
</evidence>
<sequence length="443" mass="46792">MTTRQPIYKSLYFQVIVAIVIGILLGHFYPETGVALKPLGDGFIKLIKMVIAPIIFCTVVSGIAGMQSMKSVGKTGGYALLYFEIVSTVALLIGLIVVNVVQPGAGMHIDVATLDASKVAAYVTAGKDQSIVGFILNVIPNTIVGAFANGDILQVLMFSVIFGFALHRLGAYGKPVLDFIDRFAHVMFNIINMIMKLAPIGALGAMAFTIGAYGVGSLVQLGQLMICFYITCLLFVLVVLGGICRAHGFSVIKLIRYIREELLIVLGTSSSESALPRMLIKMERLGAKKSVVGLVIPTGYSFNLDGTSIYLTMAAVFIAQATDTHMDITHQITLLLVLLLSSKGAAGVTGSGFIVLAATLSAVGHLPVAGLALILGIDRFMSEARALTNLVGNAVATIVVAKWVKELDTDKLQSELASGGTGISETREIDDLGVAEGPAPVVK</sequence>
<reference key="1">
    <citation type="journal article" date="2009" name="Genome Biol.">
        <title>Genomic and genetic analyses of diversity and plant interactions of Pseudomonas fluorescens.</title>
        <authorList>
            <person name="Silby M.W."/>
            <person name="Cerdeno-Tarraga A.M."/>
            <person name="Vernikos G.S."/>
            <person name="Giddens S.R."/>
            <person name="Jackson R.W."/>
            <person name="Preston G.M."/>
            <person name="Zhang X.-X."/>
            <person name="Moon C.D."/>
            <person name="Gehrig S.M."/>
            <person name="Godfrey S.A.C."/>
            <person name="Knight C.G."/>
            <person name="Malone J.G."/>
            <person name="Robinson Z."/>
            <person name="Spiers A.J."/>
            <person name="Harris S."/>
            <person name="Challis G.L."/>
            <person name="Yaxley A.M."/>
            <person name="Harris D."/>
            <person name="Seeger K."/>
            <person name="Murphy L."/>
            <person name="Rutter S."/>
            <person name="Squares R."/>
            <person name="Quail M.A."/>
            <person name="Saunders E."/>
            <person name="Mavromatis K."/>
            <person name="Brettin T.S."/>
            <person name="Bentley S.D."/>
            <person name="Hothersall J."/>
            <person name="Stephens E."/>
            <person name="Thomas C.M."/>
            <person name="Parkhill J."/>
            <person name="Levy S.B."/>
            <person name="Rainey P.B."/>
            <person name="Thomson N.R."/>
        </authorList>
    </citation>
    <scope>NUCLEOTIDE SEQUENCE [LARGE SCALE GENOMIC DNA]</scope>
    <source>
        <strain>SBW25</strain>
    </source>
</reference>
<gene>
    <name evidence="1" type="primary">dctA</name>
    <name type="ordered locus">PFLU_4717</name>
</gene>
<comment type="function">
    <text evidence="1">Responsible for the transport of dicarboxylates such as succinate, fumarate, and malate from the periplasm across the membrane.</text>
</comment>
<comment type="subcellular location">
    <subcellularLocation>
        <location evidence="1">Cell inner membrane</location>
        <topology evidence="1">Multi-pass membrane protein</topology>
    </subcellularLocation>
</comment>
<comment type="similarity">
    <text evidence="1">Belongs to the dicarboxylate/amino acid:cation symporter (DAACS) (TC 2.A.23) family.</text>
</comment>
<name>DCTA_PSEFS</name>
<proteinExistence type="inferred from homology"/>
<keyword id="KW-0997">Cell inner membrane</keyword>
<keyword id="KW-1003">Cell membrane</keyword>
<keyword id="KW-0472">Membrane</keyword>
<keyword id="KW-0769">Symport</keyword>
<keyword id="KW-0812">Transmembrane</keyword>
<keyword id="KW-1133">Transmembrane helix</keyword>
<keyword id="KW-0813">Transport</keyword>
<feature type="chain" id="PRO_1000214244" description="C4-dicarboxylate transport protein">
    <location>
        <begin position="1"/>
        <end position="443"/>
    </location>
</feature>
<feature type="transmembrane region" description="Helical" evidence="1">
    <location>
        <begin position="10"/>
        <end position="30"/>
    </location>
</feature>
<feature type="transmembrane region" description="Helical" evidence="1">
    <location>
        <begin position="46"/>
        <end position="66"/>
    </location>
</feature>
<feature type="transmembrane region" description="Helical" evidence="1">
    <location>
        <begin position="78"/>
        <end position="98"/>
    </location>
</feature>
<feature type="transmembrane region" description="Helical" evidence="1">
    <location>
        <begin position="143"/>
        <end position="163"/>
    </location>
</feature>
<feature type="transmembrane region" description="Helical" evidence="1">
    <location>
        <begin position="199"/>
        <end position="219"/>
    </location>
</feature>
<feature type="transmembrane region" description="Helical" evidence="1">
    <location>
        <begin position="224"/>
        <end position="244"/>
    </location>
</feature>
<feature type="transmembrane region" description="Helical" evidence="1">
    <location>
        <begin position="291"/>
        <end position="311"/>
    </location>
</feature>
<feature type="transmembrane region" description="Helical" evidence="1">
    <location>
        <begin position="332"/>
        <end position="352"/>
    </location>
</feature>
<feature type="transmembrane region" description="Helical" evidence="1">
    <location>
        <begin position="354"/>
        <end position="374"/>
    </location>
</feature>
<organism>
    <name type="scientific">Pseudomonas fluorescens (strain SBW25)</name>
    <dbReference type="NCBI Taxonomy" id="216595"/>
    <lineage>
        <taxon>Bacteria</taxon>
        <taxon>Pseudomonadati</taxon>
        <taxon>Pseudomonadota</taxon>
        <taxon>Gammaproteobacteria</taxon>
        <taxon>Pseudomonadales</taxon>
        <taxon>Pseudomonadaceae</taxon>
        <taxon>Pseudomonas</taxon>
    </lineage>
</organism>